<organism>
    <name type="scientific">Danio rerio</name>
    <name type="common">Zebrafish</name>
    <name type="synonym">Brachydanio rerio</name>
    <dbReference type="NCBI Taxonomy" id="7955"/>
    <lineage>
        <taxon>Eukaryota</taxon>
        <taxon>Metazoa</taxon>
        <taxon>Chordata</taxon>
        <taxon>Craniata</taxon>
        <taxon>Vertebrata</taxon>
        <taxon>Euteleostomi</taxon>
        <taxon>Actinopterygii</taxon>
        <taxon>Neopterygii</taxon>
        <taxon>Teleostei</taxon>
        <taxon>Ostariophysi</taxon>
        <taxon>Cypriniformes</taxon>
        <taxon>Danionidae</taxon>
        <taxon>Danioninae</taxon>
        <taxon>Danio</taxon>
    </lineage>
</organism>
<protein>
    <recommendedName>
        <fullName>Homeobox protein Hox-B8a</fullName>
        <shortName>Hox-B8</shortName>
    </recommendedName>
</protein>
<accession>Q8AWZ0</accession>
<accession>O57363</accession>
<accession>Q4PRA0</accession>
<proteinExistence type="evidence at transcript level"/>
<feature type="chain" id="PRO_0000200153" description="Homeobox protein Hox-B8a">
    <location>
        <begin position="1"/>
        <end position="245"/>
    </location>
</feature>
<feature type="DNA-binding region" description="Homeobox" evidence="2">
    <location>
        <begin position="145"/>
        <end position="204"/>
    </location>
</feature>
<feature type="region of interest" description="Disordered" evidence="3">
    <location>
        <begin position="202"/>
        <end position="245"/>
    </location>
</feature>
<feature type="short sequence motif" description="Antp-type hexapeptide">
    <location>
        <begin position="134"/>
        <end position="139"/>
    </location>
</feature>
<feature type="compositionally biased region" description="Basic and acidic residues" evidence="3">
    <location>
        <begin position="202"/>
        <end position="228"/>
    </location>
</feature>
<feature type="sequence conflict" description="In Ref. 4; CAA74865." evidence="5" ref="4">
    <original>KD</original>
    <variation>TH</variation>
    <location>
        <begin position="206"/>
        <end position="207"/>
    </location>
</feature>
<evidence type="ECO:0000250" key="1"/>
<evidence type="ECO:0000255" key="2">
    <source>
        <dbReference type="PROSITE-ProRule" id="PRU00108"/>
    </source>
</evidence>
<evidence type="ECO:0000256" key="3">
    <source>
        <dbReference type="SAM" id="MobiDB-lite"/>
    </source>
</evidence>
<evidence type="ECO:0000269" key="4">
    <source>
    </source>
</evidence>
<evidence type="ECO:0000305" key="5"/>
<gene>
    <name type="primary">hoxb8a</name>
    <name type="synonym">hoxb8</name>
</gene>
<name>HXB8A_DANRE</name>
<reference key="1">
    <citation type="journal article" date="2013" name="Nature">
        <title>The zebrafish reference genome sequence and its relationship to the human genome.</title>
        <authorList>
            <person name="Howe K."/>
            <person name="Clark M.D."/>
            <person name="Torroja C.F."/>
            <person name="Torrance J."/>
            <person name="Berthelot C."/>
            <person name="Muffato M."/>
            <person name="Collins J.E."/>
            <person name="Humphray S."/>
            <person name="McLaren K."/>
            <person name="Matthews L."/>
            <person name="McLaren S."/>
            <person name="Sealy I."/>
            <person name="Caccamo M."/>
            <person name="Churcher C."/>
            <person name="Scott C."/>
            <person name="Barrett J.C."/>
            <person name="Koch R."/>
            <person name="Rauch G.J."/>
            <person name="White S."/>
            <person name="Chow W."/>
            <person name="Kilian B."/>
            <person name="Quintais L.T."/>
            <person name="Guerra-Assuncao J.A."/>
            <person name="Zhou Y."/>
            <person name="Gu Y."/>
            <person name="Yen J."/>
            <person name="Vogel J.H."/>
            <person name="Eyre T."/>
            <person name="Redmond S."/>
            <person name="Banerjee R."/>
            <person name="Chi J."/>
            <person name="Fu B."/>
            <person name="Langley E."/>
            <person name="Maguire S.F."/>
            <person name="Laird G.K."/>
            <person name="Lloyd D."/>
            <person name="Kenyon E."/>
            <person name="Donaldson S."/>
            <person name="Sehra H."/>
            <person name="Almeida-King J."/>
            <person name="Loveland J."/>
            <person name="Trevanion S."/>
            <person name="Jones M."/>
            <person name="Quail M."/>
            <person name="Willey D."/>
            <person name="Hunt A."/>
            <person name="Burton J."/>
            <person name="Sims S."/>
            <person name="McLay K."/>
            <person name="Plumb B."/>
            <person name="Davis J."/>
            <person name="Clee C."/>
            <person name="Oliver K."/>
            <person name="Clark R."/>
            <person name="Riddle C."/>
            <person name="Elliot D."/>
            <person name="Threadgold G."/>
            <person name="Harden G."/>
            <person name="Ware D."/>
            <person name="Begum S."/>
            <person name="Mortimore B."/>
            <person name="Kerry G."/>
            <person name="Heath P."/>
            <person name="Phillimore B."/>
            <person name="Tracey A."/>
            <person name="Corby N."/>
            <person name="Dunn M."/>
            <person name="Johnson C."/>
            <person name="Wood J."/>
            <person name="Clark S."/>
            <person name="Pelan S."/>
            <person name="Griffiths G."/>
            <person name="Smith M."/>
            <person name="Glithero R."/>
            <person name="Howden P."/>
            <person name="Barker N."/>
            <person name="Lloyd C."/>
            <person name="Stevens C."/>
            <person name="Harley J."/>
            <person name="Holt K."/>
            <person name="Panagiotidis G."/>
            <person name="Lovell J."/>
            <person name="Beasley H."/>
            <person name="Henderson C."/>
            <person name="Gordon D."/>
            <person name="Auger K."/>
            <person name="Wright D."/>
            <person name="Collins J."/>
            <person name="Raisen C."/>
            <person name="Dyer L."/>
            <person name="Leung K."/>
            <person name="Robertson L."/>
            <person name="Ambridge K."/>
            <person name="Leongamornlert D."/>
            <person name="McGuire S."/>
            <person name="Gilderthorp R."/>
            <person name="Griffiths C."/>
            <person name="Manthravadi D."/>
            <person name="Nichol S."/>
            <person name="Barker G."/>
            <person name="Whitehead S."/>
            <person name="Kay M."/>
            <person name="Brown J."/>
            <person name="Murnane C."/>
            <person name="Gray E."/>
            <person name="Humphries M."/>
            <person name="Sycamore N."/>
            <person name="Barker D."/>
            <person name="Saunders D."/>
            <person name="Wallis J."/>
            <person name="Babbage A."/>
            <person name="Hammond S."/>
            <person name="Mashreghi-Mohammadi M."/>
            <person name="Barr L."/>
            <person name="Martin S."/>
            <person name="Wray P."/>
            <person name="Ellington A."/>
            <person name="Matthews N."/>
            <person name="Ellwood M."/>
            <person name="Woodmansey R."/>
            <person name="Clark G."/>
            <person name="Cooper J."/>
            <person name="Tromans A."/>
            <person name="Grafham D."/>
            <person name="Skuce C."/>
            <person name="Pandian R."/>
            <person name="Andrews R."/>
            <person name="Harrison E."/>
            <person name="Kimberley A."/>
            <person name="Garnett J."/>
            <person name="Fosker N."/>
            <person name="Hall R."/>
            <person name="Garner P."/>
            <person name="Kelly D."/>
            <person name="Bird C."/>
            <person name="Palmer S."/>
            <person name="Gehring I."/>
            <person name="Berger A."/>
            <person name="Dooley C.M."/>
            <person name="Ersan-Urun Z."/>
            <person name="Eser C."/>
            <person name="Geiger H."/>
            <person name="Geisler M."/>
            <person name="Karotki L."/>
            <person name="Kirn A."/>
            <person name="Konantz J."/>
            <person name="Konantz M."/>
            <person name="Oberlander M."/>
            <person name="Rudolph-Geiger S."/>
            <person name="Teucke M."/>
            <person name="Lanz C."/>
            <person name="Raddatz G."/>
            <person name="Osoegawa K."/>
            <person name="Zhu B."/>
            <person name="Rapp A."/>
            <person name="Widaa S."/>
            <person name="Langford C."/>
            <person name="Yang F."/>
            <person name="Schuster S.C."/>
            <person name="Carter N.P."/>
            <person name="Harrow J."/>
            <person name="Ning Z."/>
            <person name="Herrero J."/>
            <person name="Searle S.M."/>
            <person name="Enright A."/>
            <person name="Geisler R."/>
            <person name="Plasterk R.H."/>
            <person name="Lee C."/>
            <person name="Westerfield M."/>
            <person name="de Jong P.J."/>
            <person name="Zon L.I."/>
            <person name="Postlethwait J.H."/>
            <person name="Nusslein-Volhard C."/>
            <person name="Hubbard T.J."/>
            <person name="Roest Crollius H."/>
            <person name="Rogers J."/>
            <person name="Stemple D.L."/>
        </authorList>
    </citation>
    <scope>NUCLEOTIDE SEQUENCE [LARGE SCALE GENOMIC DNA]</scope>
    <source>
        <strain>Tuebingen</strain>
    </source>
</reference>
<reference key="2">
    <citation type="submission" date="2003-06" db="EMBL/GenBank/DDBJ databases">
        <authorList>
            <consortium name="NIH - Zebrafish Gene Collection (ZGC) project"/>
        </authorList>
    </citation>
    <scope>NUCLEOTIDE SEQUENCE [LARGE SCALE MRNA]</scope>
    <source>
        <tissue>Kidney</tissue>
    </source>
</reference>
<reference key="3">
    <citation type="journal article" date="2005" name="Evol. Dev.">
        <title>Genomic annotation and transcriptome analysis of the zebrafish (Danio rerio) hox complex with description of a novel member, hoxb13a.</title>
        <authorList>
            <person name="Corredor-Adamez M."/>
            <person name="Welten M.C.M."/>
            <person name="Spaink H.P."/>
            <person name="Jeffery J.E."/>
            <person name="Schoon R.T."/>
            <person name="de Bakker M.A.G."/>
            <person name="Bagowski C.P."/>
            <person name="Meijer A.H."/>
            <person name="Verbeek F.J."/>
            <person name="Richardson M.K."/>
        </authorList>
    </citation>
    <scope>NUCLEOTIDE SEQUENCE [MRNA] OF 57-157</scope>
    <source>
        <strain>Tuebingen</strain>
    </source>
</reference>
<reference key="4">
    <citation type="journal article" date="1998" name="Development">
        <title>Zebrafish hox genes: genomic organization and modified colinear expression patterns in the trunk.</title>
        <authorList>
            <person name="Prince V.E."/>
            <person name="Joly L."/>
            <person name="Ekker M."/>
            <person name="Ho R.K."/>
        </authorList>
    </citation>
    <scope>NUCLEOTIDE SEQUENCE [MRNA] OF 162-245</scope>
    <scope>DEVELOPMENTAL STAGE</scope>
    <source>
        <tissue>Embryo</tissue>
    </source>
</reference>
<dbReference type="EMBL" id="AL645782">
    <property type="protein sequence ID" value="CAD59111.1"/>
    <property type="molecule type" value="Genomic_DNA"/>
</dbReference>
<dbReference type="EMBL" id="BC053287">
    <property type="protein sequence ID" value="AAH53287.1"/>
    <property type="molecule type" value="mRNA"/>
</dbReference>
<dbReference type="EMBL" id="DQ060543">
    <property type="protein sequence ID" value="AAY67921.1"/>
    <property type="molecule type" value="mRNA"/>
</dbReference>
<dbReference type="EMBL" id="Y14530">
    <property type="protein sequence ID" value="CAA74865.1"/>
    <property type="molecule type" value="mRNA"/>
</dbReference>
<dbReference type="RefSeq" id="NP_571195.1">
    <property type="nucleotide sequence ID" value="NM_131120.1"/>
</dbReference>
<dbReference type="SMR" id="Q8AWZ0"/>
<dbReference type="FunCoup" id="Q8AWZ0">
    <property type="interactions" value="48"/>
</dbReference>
<dbReference type="STRING" id="7955.ENSDARP00000046637"/>
<dbReference type="PaxDb" id="7955-ENSDARP00000046637"/>
<dbReference type="Ensembl" id="ENSDART00000046638">
    <property type="protein sequence ID" value="ENSDARP00000046637"/>
    <property type="gene ID" value="ENSDARG00000056027"/>
</dbReference>
<dbReference type="GeneID" id="30343"/>
<dbReference type="KEGG" id="dre:30343"/>
<dbReference type="AGR" id="ZFIN:ZDB-GENE-990415-108"/>
<dbReference type="CTD" id="30343"/>
<dbReference type="ZFIN" id="ZDB-GENE-990415-108">
    <property type="gene designation" value="hoxb8a"/>
</dbReference>
<dbReference type="eggNOG" id="KOG0489">
    <property type="taxonomic scope" value="Eukaryota"/>
</dbReference>
<dbReference type="HOGENOM" id="CLU_061398_1_0_1"/>
<dbReference type="InParanoid" id="Q8AWZ0"/>
<dbReference type="OMA" id="SEDCCEK"/>
<dbReference type="OrthoDB" id="6159439at2759"/>
<dbReference type="PhylomeDB" id="Q8AWZ0"/>
<dbReference type="TreeFam" id="TF316310"/>
<dbReference type="PRO" id="PR:Q8AWZ0"/>
<dbReference type="Proteomes" id="UP000000437">
    <property type="component" value="Chromosome 3"/>
</dbReference>
<dbReference type="Bgee" id="ENSDARG00000056027">
    <property type="expression patterns" value="Expressed in head kidney and 31 other cell types or tissues"/>
</dbReference>
<dbReference type="GO" id="GO:0005634">
    <property type="term" value="C:nucleus"/>
    <property type="evidence" value="ECO:0000318"/>
    <property type="project" value="GO_Central"/>
</dbReference>
<dbReference type="GO" id="GO:0000981">
    <property type="term" value="F:DNA-binding transcription factor activity, RNA polymerase II-specific"/>
    <property type="evidence" value="ECO:0000318"/>
    <property type="project" value="GO_Central"/>
</dbReference>
<dbReference type="GO" id="GO:0000977">
    <property type="term" value="F:RNA polymerase II transcription regulatory region sequence-specific DNA binding"/>
    <property type="evidence" value="ECO:0000318"/>
    <property type="project" value="GO_Central"/>
</dbReference>
<dbReference type="GO" id="GO:0008283">
    <property type="term" value="P:cell population proliferation"/>
    <property type="evidence" value="ECO:0000315"/>
    <property type="project" value="ZFIN"/>
</dbReference>
<dbReference type="GO" id="GO:0048920">
    <property type="term" value="P:posterior lateral line neuromast primordium migration"/>
    <property type="evidence" value="ECO:0000315"/>
    <property type="project" value="ZFIN"/>
</dbReference>
<dbReference type="GO" id="GO:0006357">
    <property type="term" value="P:regulation of transcription by RNA polymerase II"/>
    <property type="evidence" value="ECO:0000318"/>
    <property type="project" value="GO_Central"/>
</dbReference>
<dbReference type="CDD" id="cd00086">
    <property type="entry name" value="homeodomain"/>
    <property type="match status" value="1"/>
</dbReference>
<dbReference type="FunFam" id="1.10.10.60:FF:000072">
    <property type="entry name" value="Homeobox protein Hox-B8"/>
    <property type="match status" value="1"/>
</dbReference>
<dbReference type="Gene3D" id="1.10.10.60">
    <property type="entry name" value="Homeodomain-like"/>
    <property type="match status" value="1"/>
</dbReference>
<dbReference type="InterPro" id="IPR050948">
    <property type="entry name" value="Antp_homeobox_TF"/>
</dbReference>
<dbReference type="InterPro" id="IPR001356">
    <property type="entry name" value="HD"/>
</dbReference>
<dbReference type="InterPro" id="IPR020479">
    <property type="entry name" value="HD_metazoa"/>
</dbReference>
<dbReference type="InterPro" id="IPR001827">
    <property type="entry name" value="Homeobox_Antennapedia_CS"/>
</dbReference>
<dbReference type="InterPro" id="IPR017970">
    <property type="entry name" value="Homeobox_CS"/>
</dbReference>
<dbReference type="InterPro" id="IPR009057">
    <property type="entry name" value="Homeodomain-like_sf"/>
</dbReference>
<dbReference type="InterPro" id="IPR000047">
    <property type="entry name" value="HTH_motif"/>
</dbReference>
<dbReference type="PANTHER" id="PTHR46166">
    <property type="entry name" value="HOMEOBOX DOMAIN-CONTAINING PROTEIN"/>
    <property type="match status" value="1"/>
</dbReference>
<dbReference type="PANTHER" id="PTHR46166:SF2">
    <property type="entry name" value="HOMEOBOX PROTEIN HOX-B8"/>
    <property type="match status" value="1"/>
</dbReference>
<dbReference type="Pfam" id="PF00046">
    <property type="entry name" value="Homeodomain"/>
    <property type="match status" value="1"/>
</dbReference>
<dbReference type="PRINTS" id="PR00024">
    <property type="entry name" value="HOMEOBOX"/>
</dbReference>
<dbReference type="PRINTS" id="PR00031">
    <property type="entry name" value="HTHREPRESSR"/>
</dbReference>
<dbReference type="SMART" id="SM00389">
    <property type="entry name" value="HOX"/>
    <property type="match status" value="1"/>
</dbReference>
<dbReference type="SUPFAM" id="SSF46689">
    <property type="entry name" value="Homeodomain-like"/>
    <property type="match status" value="1"/>
</dbReference>
<dbReference type="PROSITE" id="PS00032">
    <property type="entry name" value="ANTENNAPEDIA"/>
    <property type="match status" value="1"/>
</dbReference>
<dbReference type="PROSITE" id="PS00027">
    <property type="entry name" value="HOMEOBOX_1"/>
    <property type="match status" value="1"/>
</dbReference>
<dbReference type="PROSITE" id="PS50071">
    <property type="entry name" value="HOMEOBOX_2"/>
    <property type="match status" value="1"/>
</dbReference>
<comment type="function">
    <text evidence="1">Sequence-specific transcription factor which is part of a developmental regulatory system that provides cells with specific positional identities on the anterior-posterior axis.</text>
</comment>
<comment type="subcellular location">
    <subcellularLocation>
        <location evidence="2">Nucleus</location>
    </subcellularLocation>
</comment>
<comment type="developmental stage">
    <text evidence="4">At the 10-somite stage, expressed in the paraxial mesoderm with an anterior expression limit at somite 6. At the 20-somite stage, expressed in the developing CNS with an anterior expression limit adjacent to the somite 3/somite 4 boundary; also expressed in bilateral domains adjacent to the anterior spinal cord and ventrally along the trunk in the pronephric ducts.</text>
</comment>
<comment type="similarity">
    <text evidence="5">Belongs to the Antp homeobox family.</text>
</comment>
<sequence length="245" mass="28002">MSSYFVNSLFTKYKSGDTLRPNYYECGFAQDLGTRPTVVYGPGTGATFQHAPQIQEFYHHGASTLSAAPYQQSPCAVTCHGEPGNFYGYDALQRQTLFGAQDADLVQYSDCKLATGGIGDETDNTEQSPSPTQLFPWMRPQAAGRRRGRQTYSRYQTLELEKEFLFNPYLTRKRRIEVSHALGLTERQVKIWFQNRRMKWKKENNKDKFPSSKSEQEQIEKEKREKEQASGTQSAGEDCDKAKQM</sequence>
<keyword id="KW-0217">Developmental protein</keyword>
<keyword id="KW-0238">DNA-binding</keyword>
<keyword id="KW-0371">Homeobox</keyword>
<keyword id="KW-0539">Nucleus</keyword>
<keyword id="KW-1185">Reference proteome</keyword>
<keyword id="KW-0804">Transcription</keyword>
<keyword id="KW-0805">Transcription regulation</keyword>